<accession>A8IKD2</accession>
<gene>
    <name type="ordered locus">AZC_3892</name>
</gene>
<proteinExistence type="evidence at protein level"/>
<comment type="function">
    <text evidence="2 3">Responsible for the hydrolysis of cyanuric acid, an intermediate formed during catabolism of s-triazine based compounds in herbicides such as atrazine and polymers such as melamine. Catalyzes the hydrolytic opening of the s-triazine ring of cyanuric acid (2,4,6-trihydroxy-s-triazine) to yield carbon dioxide and carboxybiuret, which spontaneously decarboxylates to biuret.</text>
</comment>
<comment type="catalytic activity">
    <reaction evidence="2 3">
        <text>cyanurate + H2O = 1-carboxybiuret + H(+)</text>
        <dbReference type="Rhea" id="RHEA:70363"/>
        <dbReference type="ChEBI" id="CHEBI:15377"/>
        <dbReference type="ChEBI" id="CHEBI:15378"/>
        <dbReference type="ChEBI" id="CHEBI:38028"/>
        <dbReference type="ChEBI" id="CHEBI:142864"/>
        <dbReference type="EC" id="3.5.2.15"/>
    </reaction>
</comment>
<comment type="activity regulation">
    <text evidence="1 2">Inhibited by barbituric acid.</text>
</comment>
<comment type="biophysicochemical properties">
    <kinetics>
        <KM evidence="3">370 uM for cyanuric acid</KM>
        <text evidence="3">kcat is 50 sec(-1) with cyanuric acid as substrate.</text>
    </kinetics>
</comment>
<comment type="pathway">
    <text evidence="2">Xenobiotic degradation; atrazine degradation; biuret from cyanurate: step 1/1.</text>
</comment>
<comment type="subunit">
    <text evidence="2 4">Homotetramer.</text>
</comment>
<comment type="domain">
    <text evidence="2 7">The monomer structure is formed from three repeating units (RUs) that share the same structure as one another. The monomer, the active site and substrate all possess threefold rotational symmetry, to the extent that the active site possesses three potential Ser-Lys catalytic dyads. It is possible that any or all of the three active-site serines may act as nucleophile (albeit only one can do so per catalytic cycle). Mutant, bioinformatic and structural data propose one specific dyad being involved in catalysis.</text>
</comment>
<comment type="similarity">
    <text evidence="2 6">Belongs to the cyclic amide hydrolase (CyAH) family.</text>
</comment>
<feature type="chain" id="PRO_0000439909" description="Cyanuric acid amidohydrolase">
    <location>
        <begin position="1"/>
        <end position="356"/>
    </location>
</feature>
<feature type="region of interest" description="RU A" evidence="2">
    <location>
        <begin position="1"/>
        <end position="99"/>
    </location>
</feature>
<feature type="region of interest" description="RU B" evidence="2">
    <location>
        <begin position="106"/>
        <end position="243"/>
    </location>
</feature>
<feature type="region of interest" description="RU C" evidence="2">
    <location>
        <begin position="249"/>
        <end position="356"/>
    </location>
</feature>
<feature type="active site" evidence="2 5">
    <location>
        <position position="156"/>
    </location>
</feature>
<feature type="active site" description="Nucleophile" evidence="2 5">
    <location>
        <position position="226"/>
    </location>
</feature>
<feature type="binding site" evidence="2 5">
    <location>
        <position position="52"/>
    </location>
    <ligand>
        <name>substrate</name>
    </ligand>
</feature>
<feature type="binding site" evidence="2 5">
    <location>
        <begin position="79"/>
        <end position="80"/>
    </location>
    <ligand>
        <name>substrate</name>
    </ligand>
</feature>
<feature type="binding site" evidence="2 5">
    <location>
        <position position="188"/>
    </location>
    <ligand>
        <name>substrate</name>
    </ligand>
</feature>
<feature type="binding site" evidence="2 5">
    <location>
        <begin position="226"/>
        <end position="227"/>
    </location>
    <ligand>
        <name>substrate</name>
    </ligand>
</feature>
<feature type="binding site" evidence="2 5">
    <location>
        <position position="287"/>
    </location>
    <ligand>
        <name>Mg(2+)</name>
        <dbReference type="ChEBI" id="CHEBI:18420"/>
    </ligand>
</feature>
<feature type="binding site" evidence="2 5">
    <location>
        <position position="314"/>
    </location>
    <ligand>
        <name>substrate</name>
    </ligand>
</feature>
<feature type="binding site" evidence="2 5">
    <location>
        <begin position="333"/>
        <end position="334"/>
    </location>
    <ligand>
        <name>substrate</name>
    </ligand>
</feature>
<feature type="binding site" evidence="2 5">
    <location>
        <position position="336"/>
    </location>
    <ligand>
        <name>Mg(2+)</name>
        <dbReference type="ChEBI" id="CHEBI:18420"/>
    </ligand>
</feature>
<feature type="binding site" evidence="2 5">
    <location>
        <position position="339"/>
    </location>
    <ligand>
        <name>Mg(2+)</name>
        <dbReference type="ChEBI" id="CHEBI:18420"/>
    </ligand>
</feature>
<feature type="binding site" evidence="2 5">
    <location>
        <position position="340"/>
    </location>
    <ligand>
        <name>Mg(2+)</name>
        <dbReference type="ChEBI" id="CHEBI:18420"/>
    </ligand>
</feature>
<feature type="binding site" evidence="2 5">
    <location>
        <position position="341"/>
    </location>
    <ligand>
        <name>Mg(2+)</name>
        <dbReference type="ChEBI" id="CHEBI:18420"/>
    </ligand>
</feature>
<feature type="binding site" evidence="2 5">
    <location>
        <position position="344"/>
    </location>
    <ligand>
        <name>Mg(2+)</name>
        <dbReference type="ChEBI" id="CHEBI:18420"/>
    </ligand>
</feature>
<feature type="site" description="Important for substrate specificity" evidence="2">
    <location>
        <position position="310"/>
    </location>
</feature>
<feature type="mutagenesis site" description="Reduces catalytic activity 1e4-fold." evidence="5">
    <original>K</original>
    <variation>A</variation>
    <location>
        <position position="40"/>
    </location>
</feature>
<feature type="mutagenesis site" description="Reduces catalytic activity 1e8-fold." evidence="5">
    <original>S</original>
    <variation>A</variation>
    <location>
        <position position="79"/>
    </location>
</feature>
<feature type="mutagenesis site" description="Reduces catalytic activity 1e4-fold." evidence="5">
    <original>K</original>
    <variation>A</variation>
    <location>
        <position position="156"/>
    </location>
</feature>
<feature type="mutagenesis site" description="Reduces catalytic activity 1e9-fold." evidence="5">
    <original>S</original>
    <variation>A</variation>
    <location>
        <position position="226"/>
    </location>
</feature>
<feature type="mutagenesis site" description="Reduces catalytic activity 1e4-fold." evidence="5">
    <original>K</original>
    <variation>A</variation>
    <location>
        <position position="285"/>
    </location>
</feature>
<feature type="mutagenesis site" description="Reduces catalytic activity 1e8-fold." evidence="5">
    <original>S</original>
    <variation>A</variation>
    <location>
        <position position="333"/>
    </location>
</feature>
<feature type="strand" evidence="8">
    <location>
        <begin position="2"/>
        <end position="10"/>
    </location>
</feature>
<feature type="helix" evidence="8">
    <location>
        <begin position="18"/>
        <end position="25"/>
    </location>
</feature>
<feature type="helix" evidence="8">
    <location>
        <begin position="31"/>
        <end position="33"/>
    </location>
</feature>
<feature type="strand" evidence="8">
    <location>
        <begin position="34"/>
        <end position="43"/>
    </location>
</feature>
<feature type="helix" evidence="8">
    <location>
        <begin position="51"/>
        <end position="67"/>
    </location>
</feature>
<feature type="helix" evidence="8">
    <location>
        <begin position="68"/>
        <end position="73"/>
    </location>
</feature>
<feature type="strand" evidence="8">
    <location>
        <begin position="74"/>
        <end position="80"/>
    </location>
</feature>
<feature type="strand" evidence="8">
    <location>
        <begin position="89"/>
        <end position="97"/>
    </location>
</feature>
<feature type="strand" evidence="8">
    <location>
        <begin position="106"/>
        <end position="113"/>
    </location>
</feature>
<feature type="turn" evidence="8">
    <location>
        <begin position="119"/>
        <end position="123"/>
    </location>
</feature>
<feature type="helix" evidence="8">
    <location>
        <begin position="125"/>
        <end position="141"/>
    </location>
</feature>
<feature type="helix" evidence="8">
    <location>
        <begin position="147"/>
        <end position="149"/>
    </location>
</feature>
<feature type="strand" evidence="8">
    <location>
        <begin position="150"/>
        <end position="157"/>
    </location>
</feature>
<feature type="helix" evidence="8">
    <location>
        <begin position="162"/>
        <end position="170"/>
    </location>
</feature>
<feature type="helix" evidence="8">
    <location>
        <begin position="180"/>
        <end position="199"/>
    </location>
</feature>
<feature type="helix" evidence="8">
    <location>
        <begin position="204"/>
        <end position="206"/>
    </location>
</feature>
<feature type="turn" evidence="8">
    <location>
        <begin position="209"/>
        <end position="214"/>
    </location>
</feature>
<feature type="strand" evidence="8">
    <location>
        <begin position="220"/>
        <end position="227"/>
    </location>
</feature>
<feature type="strand" evidence="8">
    <location>
        <begin position="235"/>
        <end position="242"/>
    </location>
</feature>
<feature type="strand" evidence="8">
    <location>
        <begin position="246"/>
        <end position="258"/>
    </location>
</feature>
<feature type="helix" evidence="8">
    <location>
        <begin position="263"/>
        <end position="271"/>
    </location>
</feature>
<feature type="strand" evidence="8">
    <location>
        <begin position="281"/>
        <end position="286"/>
    </location>
</feature>
<feature type="strand" evidence="8">
    <location>
        <begin position="292"/>
        <end position="294"/>
    </location>
</feature>
<feature type="strand" evidence="8">
    <location>
        <begin position="305"/>
        <end position="307"/>
    </location>
</feature>
<feature type="helix" evidence="8">
    <location>
        <begin position="309"/>
        <end position="325"/>
    </location>
</feature>
<feature type="strand" evidence="8">
    <location>
        <begin position="331"/>
        <end position="334"/>
    </location>
</feature>
<feature type="strand" evidence="8">
    <location>
        <begin position="339"/>
        <end position="341"/>
    </location>
</feature>
<feature type="strand" evidence="8">
    <location>
        <begin position="345"/>
        <end position="352"/>
    </location>
</feature>
<organism>
    <name type="scientific">Azorhizobium caulinodans (strain ATCC 43989 / DSM 5975 / JCM 20966 / LMG 6465 / NBRC 14845 / NCIMB 13405 / ORS 571)</name>
    <dbReference type="NCBI Taxonomy" id="438753"/>
    <lineage>
        <taxon>Bacteria</taxon>
        <taxon>Pseudomonadati</taxon>
        <taxon>Pseudomonadota</taxon>
        <taxon>Alphaproteobacteria</taxon>
        <taxon>Hyphomicrobiales</taxon>
        <taxon>Xanthobacteraceae</taxon>
        <taxon>Azorhizobium</taxon>
    </lineage>
</organism>
<protein>
    <recommendedName>
        <fullName evidence="2">Cyanuric acid amidohydrolase</fullName>
        <shortName evidence="2">CAH</shortName>
        <ecNumber evidence="2 3">3.5.2.15</ecNumber>
    </recommendedName>
</protein>
<name>CAH_AZOC5</name>
<keyword id="KW-0002">3D-structure</keyword>
<keyword id="KW-0378">Hydrolase</keyword>
<keyword id="KW-0460">Magnesium</keyword>
<keyword id="KW-0479">Metal-binding</keyword>
<keyword id="KW-1185">Reference proteome</keyword>
<reference key="1">
    <citation type="submission" date="2007-04" db="EMBL/GenBank/DDBJ databases">
        <title>Complete genome sequence of the nitrogen-fixing bacterium Azorhizobium caulinodans ORS571.</title>
        <authorList>
            <person name="Lee K.B."/>
            <person name="Backer P.D."/>
            <person name="Aono T."/>
            <person name="Liu C.T."/>
            <person name="Suzuki S."/>
            <person name="Suzuki T."/>
            <person name="Kaneko T."/>
            <person name="Yamada M."/>
            <person name="Tabata S."/>
            <person name="Kupfer D.M."/>
            <person name="Najar F.Z."/>
            <person name="Wiley G.B."/>
            <person name="Roe B."/>
            <person name="Binnewies T."/>
            <person name="Ussery D."/>
            <person name="Vereecke D."/>
            <person name="Gevers D."/>
            <person name="Holsters M."/>
            <person name="Oyaizu H."/>
        </authorList>
    </citation>
    <scope>NUCLEOTIDE SEQUENCE [LARGE SCALE GENOMIC DNA]</scope>
    <source>
        <strain>ATCC 43989 / DSM 5975 / JCM 20966 / LMG 6465 / NBRC 14845 / NCIMB 13405 / ORS 571</strain>
    </source>
</reference>
<reference key="2">
    <citation type="journal article" date="2012" name="J. Bacteriol.">
        <title>Defining sequence space and reaction products within the cyanuric acid hydrolase (AtzD)/barbiturase protein family.</title>
        <authorList>
            <person name="Seffernick J.L."/>
            <person name="Erickson J.S."/>
            <person name="Cameron S.M."/>
            <person name="Cho S."/>
            <person name="Dodge A.G."/>
            <person name="Richman J.E."/>
            <person name="Sadowsky M.J."/>
            <person name="Wackett L.P."/>
        </authorList>
    </citation>
    <scope>FUNCTION</scope>
    <scope>CATALYTIC ACTIVITY</scope>
    <scope>BIOPHYSICOCHEMICAL PROPERTIES</scope>
</reference>
<reference key="3">
    <citation type="journal article" date="2013" name="Acta Crystallogr. F">
        <title>Crystallization and preliminary X-ray diffraction studies of cyanuric acid hydrolase from Azorhizobium caulinodans.</title>
        <authorList>
            <person name="Cho S."/>
            <person name="Shi K."/>
            <person name="Wackett L.P."/>
            <person name="Aihara H."/>
        </authorList>
    </citation>
    <scope>SUBUNIT</scope>
</reference>
<reference key="4">
    <citation type="journal article" date="2014" name="PLoS ONE">
        <title>Cyanuric acid hydrolase from Azorhizobium caulinodans ORS 571: crystal structure and insights into a new class of Ser-Lys dyad proteins.</title>
        <authorList>
            <person name="Cho S."/>
            <person name="Shi K."/>
            <person name="Seffernick J.L."/>
            <person name="Dodge A.G."/>
            <person name="Wackett L.P."/>
            <person name="Aihara H."/>
        </authorList>
    </citation>
    <scope>X-RAY CRYSTALLOGRAPHY (2.70 ANGSTROMS) IN COMPLEX WITH MAGNESIUM AND INHIBITOR</scope>
    <scope>ACTIVE SITE</scope>
    <scope>MUTAGENESIS OF LYS-40; SER-79; LYS-156; SER-226; LYS-285 AND SER-333</scope>
</reference>
<evidence type="ECO:0000250" key="1">
    <source>
        <dbReference type="UniProtKB" id="P58329"/>
    </source>
</evidence>
<evidence type="ECO:0000255" key="2">
    <source>
        <dbReference type="HAMAP-Rule" id="MF_01989"/>
    </source>
</evidence>
<evidence type="ECO:0000269" key="3">
    <source>
    </source>
</evidence>
<evidence type="ECO:0000269" key="4">
    <source>
    </source>
</evidence>
<evidence type="ECO:0000269" key="5">
    <source>
    </source>
</evidence>
<evidence type="ECO:0000305" key="6"/>
<evidence type="ECO:0000305" key="7">
    <source>
    </source>
</evidence>
<evidence type="ECO:0007829" key="8">
    <source>
        <dbReference type="PDB" id="4NQ3"/>
    </source>
</evidence>
<dbReference type="EC" id="3.5.2.15" evidence="2 3"/>
<dbReference type="EMBL" id="AP009384">
    <property type="protein sequence ID" value="BAF89890.1"/>
    <property type="molecule type" value="Genomic_DNA"/>
</dbReference>
<dbReference type="RefSeq" id="WP_012172412.1">
    <property type="nucleotide sequence ID" value="NC_009937.1"/>
</dbReference>
<dbReference type="PDB" id="4NQ3">
    <property type="method" value="X-ray"/>
    <property type="resolution" value="2.70 A"/>
    <property type="chains" value="A/B=1-356"/>
</dbReference>
<dbReference type="PDBsum" id="4NQ3"/>
<dbReference type="SMR" id="A8IKD2"/>
<dbReference type="STRING" id="438753.AZC_3892"/>
<dbReference type="KEGG" id="azc:AZC_3892"/>
<dbReference type="eggNOG" id="ENOG502Z8BS">
    <property type="taxonomic scope" value="Bacteria"/>
</dbReference>
<dbReference type="HOGENOM" id="CLU_808206_0_0_5"/>
<dbReference type="SABIO-RK" id="A8IKD2"/>
<dbReference type="UniPathway" id="UPA00008">
    <property type="reaction ID" value="UER00502"/>
</dbReference>
<dbReference type="EvolutionaryTrace" id="A8IKD2"/>
<dbReference type="Proteomes" id="UP000000270">
    <property type="component" value="Chromosome"/>
</dbReference>
<dbReference type="GO" id="GO:0018753">
    <property type="term" value="F:cyanuric acid amidohydrolase activity"/>
    <property type="evidence" value="ECO:0007669"/>
    <property type="project" value="UniProtKB-UniRule"/>
</dbReference>
<dbReference type="GO" id="GO:0046872">
    <property type="term" value="F:metal ion binding"/>
    <property type="evidence" value="ECO:0007669"/>
    <property type="project" value="UniProtKB-UniRule"/>
</dbReference>
<dbReference type="GO" id="GO:0019381">
    <property type="term" value="P:atrazine catabolic process"/>
    <property type="evidence" value="ECO:0007669"/>
    <property type="project" value="UniProtKB-UniRule"/>
</dbReference>
<dbReference type="Gene3D" id="3.30.1330.160">
    <property type="entry name" value="Cyanuric acid hydrolase/Barbituras, RU C"/>
    <property type="match status" value="1"/>
</dbReference>
<dbReference type="Gene3D" id="3.30.1330.170">
    <property type="entry name" value="Cyanuric acid hydrolase/Barbiturase, RU A"/>
    <property type="match status" value="1"/>
</dbReference>
<dbReference type="Gene3D" id="3.30.1330.180">
    <property type="entry name" value="Cyanuric acid hydrolase/Barbiturase, RU B"/>
    <property type="match status" value="1"/>
</dbReference>
<dbReference type="HAMAP" id="MF_01989">
    <property type="entry name" value="Cyc_amidohydrol"/>
    <property type="match status" value="1"/>
</dbReference>
<dbReference type="InterPro" id="IPR014086">
    <property type="entry name" value="AtzD/Barbiturase"/>
</dbReference>
<dbReference type="InterPro" id="IPR043008">
    <property type="entry name" value="AtzD/Barbiturase_RUA"/>
</dbReference>
<dbReference type="InterPro" id="IPR043006">
    <property type="entry name" value="AtzD/Barbiturase_RUB"/>
</dbReference>
<dbReference type="InterPro" id="IPR043007">
    <property type="entry name" value="AtzD/Barbiturase_RUC"/>
</dbReference>
<dbReference type="NCBIfam" id="TIGR02714">
    <property type="entry name" value="amido_AtzD_TrzD"/>
    <property type="match status" value="1"/>
</dbReference>
<dbReference type="Pfam" id="PF09663">
    <property type="entry name" value="Amido_AtzD_TrzD"/>
    <property type="match status" value="1"/>
</dbReference>
<sequence length="356" mass="36040">MPIAKVHRIATASPDDVSGLAAAIATGAIAPAGILAIFGKTEGNGCVNDFSRGFAVQSLQMLLRGHMGAAADEVCLVMSGGTEGGMSPHFLVFERAEGNAPEAAPALAIGRAHTPDLPFEALGRMGQVRMVAQAVRRAMAAAGITDPEDVHFVQVKCPLLTAMRVKEAEARGATTATSDTLKSMGLSRGASALGIALALGEVAEDALSDAVICADYGLWSARASCSSGIELLGHEIVVLGMSEGWSGPLAIAHGVMADAIDVTPVKAALSALGAEAGEATIVLAKAEPSRSGRIRGKRHTMLDDSDISPTRHARAFVAGALAGVVGHTEIYVSGGGEHQGPDGGGPVAVIAARTMG</sequence>